<dbReference type="EC" id="4.2.2.n1" evidence="1"/>
<dbReference type="EMBL" id="CU928163">
    <property type="protein sequence ID" value="CAR14481.1"/>
    <property type="molecule type" value="Genomic_DNA"/>
</dbReference>
<dbReference type="RefSeq" id="WP_001298916.1">
    <property type="nucleotide sequence ID" value="NC_011751.1"/>
</dbReference>
<dbReference type="RefSeq" id="YP_002414000.1">
    <property type="nucleotide sequence ID" value="NC_011751.1"/>
</dbReference>
<dbReference type="SMR" id="B7N7L9"/>
<dbReference type="STRING" id="585056.ECUMN_3318"/>
<dbReference type="CAZy" id="GH23">
    <property type="family name" value="Glycoside Hydrolase Family 23"/>
</dbReference>
<dbReference type="GeneID" id="93779028"/>
<dbReference type="KEGG" id="eum:ECUMN_3318"/>
<dbReference type="PATRIC" id="fig|585056.7.peg.3497"/>
<dbReference type="HOGENOM" id="CLU_044583_0_0_6"/>
<dbReference type="Proteomes" id="UP000007097">
    <property type="component" value="Chromosome"/>
</dbReference>
<dbReference type="GO" id="GO:0009279">
    <property type="term" value="C:cell outer membrane"/>
    <property type="evidence" value="ECO:0007669"/>
    <property type="project" value="UniProtKB-SubCell"/>
</dbReference>
<dbReference type="GO" id="GO:0016798">
    <property type="term" value="F:hydrolase activity, acting on glycosyl bonds"/>
    <property type="evidence" value="ECO:0007669"/>
    <property type="project" value="InterPro"/>
</dbReference>
<dbReference type="GO" id="GO:0008933">
    <property type="term" value="F:peptidoglycan lytic transglycosylase activity"/>
    <property type="evidence" value="ECO:0007669"/>
    <property type="project" value="UniProtKB-UniRule"/>
</dbReference>
<dbReference type="GO" id="GO:0016998">
    <property type="term" value="P:cell wall macromolecule catabolic process"/>
    <property type="evidence" value="ECO:0007669"/>
    <property type="project" value="UniProtKB-UniRule"/>
</dbReference>
<dbReference type="GO" id="GO:0071555">
    <property type="term" value="P:cell wall organization"/>
    <property type="evidence" value="ECO:0007669"/>
    <property type="project" value="UniProtKB-KW"/>
</dbReference>
<dbReference type="GO" id="GO:0000270">
    <property type="term" value="P:peptidoglycan metabolic process"/>
    <property type="evidence" value="ECO:0007669"/>
    <property type="project" value="InterPro"/>
</dbReference>
<dbReference type="CDD" id="cd16893">
    <property type="entry name" value="LT_MltC_MltE"/>
    <property type="match status" value="1"/>
</dbReference>
<dbReference type="FunFam" id="1.10.530.10:FF:000002">
    <property type="entry name" value="Membrane-bound lytic murein transglycosylase C"/>
    <property type="match status" value="1"/>
</dbReference>
<dbReference type="Gene3D" id="1.10.530.10">
    <property type="match status" value="1"/>
</dbReference>
<dbReference type="HAMAP" id="MF_01616">
    <property type="entry name" value="MltC"/>
    <property type="match status" value="1"/>
</dbReference>
<dbReference type="InterPro" id="IPR023346">
    <property type="entry name" value="Lysozyme-like_dom_sf"/>
</dbReference>
<dbReference type="InterPro" id="IPR023664">
    <property type="entry name" value="Murein_transglycosylaseC"/>
</dbReference>
<dbReference type="InterPro" id="IPR024570">
    <property type="entry name" value="Murein_transglycosylaseC_N"/>
</dbReference>
<dbReference type="InterPro" id="IPR000189">
    <property type="entry name" value="Transglyc_AS"/>
</dbReference>
<dbReference type="InterPro" id="IPR008258">
    <property type="entry name" value="Transglycosylase_SLT_dom_1"/>
</dbReference>
<dbReference type="NCBIfam" id="NF008670">
    <property type="entry name" value="PRK11671.1"/>
    <property type="match status" value="1"/>
</dbReference>
<dbReference type="PANTHER" id="PTHR37423:SF2">
    <property type="entry name" value="MEMBRANE-BOUND LYTIC MUREIN TRANSGLYCOSYLASE C"/>
    <property type="match status" value="1"/>
</dbReference>
<dbReference type="PANTHER" id="PTHR37423">
    <property type="entry name" value="SOLUBLE LYTIC MUREIN TRANSGLYCOSYLASE-RELATED"/>
    <property type="match status" value="1"/>
</dbReference>
<dbReference type="Pfam" id="PF11873">
    <property type="entry name" value="Mltc_N"/>
    <property type="match status" value="1"/>
</dbReference>
<dbReference type="Pfam" id="PF01464">
    <property type="entry name" value="SLT"/>
    <property type="match status" value="1"/>
</dbReference>
<dbReference type="SUPFAM" id="SSF53955">
    <property type="entry name" value="Lysozyme-like"/>
    <property type="match status" value="1"/>
</dbReference>
<dbReference type="PROSITE" id="PS51257">
    <property type="entry name" value="PROKAR_LIPOPROTEIN"/>
    <property type="match status" value="1"/>
</dbReference>
<dbReference type="PROSITE" id="PS00922">
    <property type="entry name" value="TRANSGLYCOSYLASE"/>
    <property type="match status" value="1"/>
</dbReference>
<accession>B7N7L9</accession>
<feature type="signal peptide" evidence="1">
    <location>
        <begin position="1"/>
        <end position="16"/>
    </location>
</feature>
<feature type="chain" id="PRO_1000185925" description="Membrane-bound lytic murein transglycosylase C">
    <location>
        <begin position="17"/>
        <end position="359"/>
    </location>
</feature>
<feature type="lipid moiety-binding region" description="N-palmitoyl cysteine" evidence="1">
    <location>
        <position position="17"/>
    </location>
</feature>
<feature type="lipid moiety-binding region" description="S-diacylglycerol cysteine" evidence="1">
    <location>
        <position position="17"/>
    </location>
</feature>
<keyword id="KW-0998">Cell outer membrane</keyword>
<keyword id="KW-0961">Cell wall biogenesis/degradation</keyword>
<keyword id="KW-0449">Lipoprotein</keyword>
<keyword id="KW-0456">Lyase</keyword>
<keyword id="KW-0472">Membrane</keyword>
<keyword id="KW-0564">Palmitate</keyword>
<keyword id="KW-0732">Signal</keyword>
<comment type="function">
    <text evidence="1">Murein-degrading enzyme. May play a role in recycling of muropeptides during cell elongation and/or cell division.</text>
</comment>
<comment type="catalytic activity">
    <reaction evidence="1">
        <text>Exolytic cleavage of the (1-&gt;4)-beta-glycosidic linkage between N-acetylmuramic acid (MurNAc) and N-acetylglucosamine (GlcNAc) residues in peptidoglycan, from either the reducing or the non-reducing ends of the peptidoglycan chains, with concomitant formation of a 1,6-anhydrobond in the MurNAc residue.</text>
        <dbReference type="EC" id="4.2.2.n1"/>
    </reaction>
</comment>
<comment type="subcellular location">
    <subcellularLocation>
        <location evidence="1">Cell outer membrane</location>
        <topology evidence="1">Lipid-anchor</topology>
    </subcellularLocation>
</comment>
<comment type="similarity">
    <text evidence="1">Belongs to the transglycosylase Slt family.</text>
</comment>
<name>MLTC_ECOLU</name>
<proteinExistence type="inferred from homology"/>
<reference key="1">
    <citation type="journal article" date="2009" name="PLoS Genet.">
        <title>Organised genome dynamics in the Escherichia coli species results in highly diverse adaptive paths.</title>
        <authorList>
            <person name="Touchon M."/>
            <person name="Hoede C."/>
            <person name="Tenaillon O."/>
            <person name="Barbe V."/>
            <person name="Baeriswyl S."/>
            <person name="Bidet P."/>
            <person name="Bingen E."/>
            <person name="Bonacorsi S."/>
            <person name="Bouchier C."/>
            <person name="Bouvet O."/>
            <person name="Calteau A."/>
            <person name="Chiapello H."/>
            <person name="Clermont O."/>
            <person name="Cruveiller S."/>
            <person name="Danchin A."/>
            <person name="Diard M."/>
            <person name="Dossat C."/>
            <person name="Karoui M.E."/>
            <person name="Frapy E."/>
            <person name="Garry L."/>
            <person name="Ghigo J.M."/>
            <person name="Gilles A.M."/>
            <person name="Johnson J."/>
            <person name="Le Bouguenec C."/>
            <person name="Lescat M."/>
            <person name="Mangenot S."/>
            <person name="Martinez-Jehanne V."/>
            <person name="Matic I."/>
            <person name="Nassif X."/>
            <person name="Oztas S."/>
            <person name="Petit M.A."/>
            <person name="Pichon C."/>
            <person name="Rouy Z."/>
            <person name="Ruf C.S."/>
            <person name="Schneider D."/>
            <person name="Tourret J."/>
            <person name="Vacherie B."/>
            <person name="Vallenet D."/>
            <person name="Medigue C."/>
            <person name="Rocha E.P.C."/>
            <person name="Denamur E."/>
        </authorList>
    </citation>
    <scope>NUCLEOTIDE SEQUENCE [LARGE SCALE GENOMIC DNA]</scope>
    <source>
        <strain>UMN026 / ExPEC</strain>
    </source>
</reference>
<organism>
    <name type="scientific">Escherichia coli O17:K52:H18 (strain UMN026 / ExPEC)</name>
    <dbReference type="NCBI Taxonomy" id="585056"/>
    <lineage>
        <taxon>Bacteria</taxon>
        <taxon>Pseudomonadati</taxon>
        <taxon>Pseudomonadota</taxon>
        <taxon>Gammaproteobacteria</taxon>
        <taxon>Enterobacterales</taxon>
        <taxon>Enterobacteriaceae</taxon>
        <taxon>Escherichia</taxon>
    </lineage>
</organism>
<protein>
    <recommendedName>
        <fullName evidence="1">Membrane-bound lytic murein transglycosylase C</fullName>
        <ecNumber evidence="1">4.2.2.n1</ecNumber>
    </recommendedName>
    <alternativeName>
        <fullName evidence="1">Murein lyase C</fullName>
    </alternativeName>
</protein>
<evidence type="ECO:0000255" key="1">
    <source>
        <dbReference type="HAMAP-Rule" id="MF_01616"/>
    </source>
</evidence>
<sequence length="359" mass="40112">MKKYLALALIAPLLISCSTTKKGDTYNEAWVKDTNGFDILMGQFAHNIENIWGFKEVVIAGPKDYVKYTDQYQTRSHINFDDGTITIETIAGTEPAAHLRRAIIKTLLMGDDPSSVDLYSDVDDITISKEPFLYGQVVDNTGQPIRWEGRASNFADYLLKNRLQSRSNGLRIIYSVTINMVPNHLDKRAHKYLGMVRQASRKYGVDESLILAIMQTESSFNPYAVSRSDALGLMQVVQHTAGKDVFRSQGKSGTPSRSFLFDPASNIDTGTAYLAMLNNVYLGGIDNPTSRRYAVITAYNGGAGSVLRVFSNDKIQAANIINTMTPGDVYQTLTTRHPSAESRRYLYKVNTAQKSYRRR</sequence>
<gene>
    <name evidence="1" type="primary">mltC</name>
    <name type="ordered locus">ECUMN_3318</name>
</gene>